<reference key="1">
    <citation type="journal article" date="1996" name="Mol. Phylogenet. Evol.">
        <title>K-casein gene phylogeny of higher ruminants (Pecora, Artiodactyla).</title>
        <authorList>
            <person name="Cronin M.A."/>
            <person name="Stuart R."/>
            <person name="Pierson B.J."/>
            <person name="Patton J.C."/>
        </authorList>
    </citation>
    <scope>NUCLEOTIDE SEQUENCE [GENOMIC DNA]</scope>
</reference>
<proteinExistence type="evidence at transcript level"/>
<evidence type="ECO:0000250" key="1"/>
<evidence type="ECO:0000250" key="2">
    <source>
        <dbReference type="UniProtKB" id="P02668"/>
    </source>
</evidence>
<evidence type="ECO:0000256" key="3">
    <source>
        <dbReference type="SAM" id="MobiDB-lite"/>
    </source>
</evidence>
<evidence type="ECO:0000305" key="4"/>
<gene>
    <name type="primary">CSN3</name>
    <name type="synonym">CSN10</name>
    <name type="synonym">CSNK</name>
</gene>
<comment type="function">
    <text>Kappa-casein stabilizes micelle formation, preventing casein precipitation in milk.</text>
</comment>
<comment type="subcellular location">
    <subcellularLocation>
        <location>Secreted</location>
    </subcellularLocation>
</comment>
<comment type="tissue specificity">
    <text>Mammary gland specific. Secreted in milk.</text>
</comment>
<comment type="similarity">
    <text evidence="4">Belongs to the kappa-casein family.</text>
</comment>
<protein>
    <recommendedName>
        <fullName>Kappa-casein</fullName>
    </recommendedName>
</protein>
<dbReference type="EMBL" id="U37513">
    <property type="protein sequence ID" value="AAC48659.1"/>
    <property type="molecule type" value="Genomic_DNA"/>
</dbReference>
<dbReference type="GlyCosmos" id="Q95224">
    <property type="glycosylation" value="7 sites, No reported glycans"/>
</dbReference>
<dbReference type="GO" id="GO:0005615">
    <property type="term" value="C:extracellular space"/>
    <property type="evidence" value="ECO:0007669"/>
    <property type="project" value="TreeGrafter"/>
</dbReference>
<dbReference type="GO" id="GO:0007595">
    <property type="term" value="P:lactation"/>
    <property type="evidence" value="ECO:0007669"/>
    <property type="project" value="TreeGrafter"/>
</dbReference>
<dbReference type="GO" id="GO:0050821">
    <property type="term" value="P:protein stabilization"/>
    <property type="evidence" value="ECO:0007669"/>
    <property type="project" value="TreeGrafter"/>
</dbReference>
<dbReference type="InterPro" id="IPR000117">
    <property type="entry name" value="Casein_kappa"/>
</dbReference>
<dbReference type="PANTHER" id="PTHR11470">
    <property type="entry name" value="KAPPA CASEIN"/>
    <property type="match status" value="1"/>
</dbReference>
<dbReference type="PANTHER" id="PTHR11470:SF2">
    <property type="entry name" value="KAPPA-CASEIN"/>
    <property type="match status" value="1"/>
</dbReference>
<dbReference type="Pfam" id="PF00997">
    <property type="entry name" value="Casein_kappa"/>
    <property type="match status" value="1"/>
</dbReference>
<sequence>VALINNQFLPYPYYAKPVAVRSPAQTLQWQVLPNTVPAKSCQDQPTTMAHHPHPHLSFMAIPPKKDQDKTEIPAINTIASVEPTVHSTPTTEAVVNTVDNPEASSESIASAPETNAAQVTTTEV</sequence>
<name>CASK_OVIDA</name>
<organism>
    <name type="scientific">Ovis dalli</name>
    <name type="common">Dall's sheep</name>
    <name type="synonym">Thinhorn sheep</name>
    <dbReference type="NCBI Taxonomy" id="9943"/>
    <lineage>
        <taxon>Eukaryota</taxon>
        <taxon>Metazoa</taxon>
        <taxon>Chordata</taxon>
        <taxon>Craniata</taxon>
        <taxon>Vertebrata</taxon>
        <taxon>Euteleostomi</taxon>
        <taxon>Mammalia</taxon>
        <taxon>Eutheria</taxon>
        <taxon>Laurasiatheria</taxon>
        <taxon>Artiodactyla</taxon>
        <taxon>Ruminantia</taxon>
        <taxon>Pecora</taxon>
        <taxon>Bovidae</taxon>
        <taxon>Caprinae</taxon>
        <taxon>Ovis</taxon>
    </lineage>
</organism>
<feature type="chain" id="PRO_0000144117" description="Kappa-casein">
    <location>
        <begin position="1" status="less than"/>
        <end position="124"/>
    </location>
</feature>
<feature type="region of interest" description="Disordered" evidence="3">
    <location>
        <begin position="39"/>
        <end position="58"/>
    </location>
</feature>
<feature type="region of interest" description="Disordered" evidence="3">
    <location>
        <begin position="98"/>
        <end position="124"/>
    </location>
</feature>
<feature type="compositionally biased region" description="Low complexity" evidence="3">
    <location>
        <begin position="101"/>
        <end position="113"/>
    </location>
</feature>
<feature type="compositionally biased region" description="Polar residues" evidence="3">
    <location>
        <begin position="115"/>
        <end position="124"/>
    </location>
</feature>
<feature type="site" description="Cleavage; by chymosin/rennin" evidence="1">
    <location>
        <begin position="58"/>
        <end position="59"/>
    </location>
</feature>
<feature type="modified residue" description="Phosphoserine" evidence="2">
    <location>
        <position position="80"/>
    </location>
</feature>
<feature type="modified residue" description="Phosphoserine; alternate" evidence="2">
    <location>
        <position position="104"/>
    </location>
</feature>
<feature type="glycosylation site" description="O-linked (GalNAc...) threonine" evidence="2">
    <location>
        <position position="84"/>
    </location>
</feature>
<feature type="glycosylation site" description="O-linked (GalNAc...) serine" evidence="2">
    <location>
        <position position="87"/>
    </location>
</feature>
<feature type="glycosylation site" description="O-linked (GalNAc...) threonine" evidence="2">
    <location>
        <position position="88"/>
    </location>
</feature>
<feature type="glycosylation site" description="O-linked (GalNAc...) threonine" evidence="2">
    <location>
        <position position="91"/>
    </location>
</feature>
<feature type="glycosylation site" description="O-linked (GalNAc...) threonine" evidence="2">
    <location>
        <position position="97"/>
    </location>
</feature>
<feature type="glycosylation site" description="O-linked (GalNAc...) serine; alternate" evidence="2">
    <location>
        <position position="104"/>
    </location>
</feature>
<feature type="glycosylation site" description="O-linked (GalNAc...) threonine" evidence="2">
    <location>
        <position position="120"/>
    </location>
</feature>
<feature type="non-terminal residue">
    <location>
        <position position="1"/>
    </location>
</feature>
<keyword id="KW-0325">Glycoprotein</keyword>
<keyword id="KW-0494">Milk protein</keyword>
<keyword id="KW-0597">Phosphoprotein</keyword>
<keyword id="KW-0964">Secreted</keyword>
<accession>Q95224</accession>